<dbReference type="EMBL" id="S40185">
    <property type="protein sequence ID" value="AAB22544.1"/>
    <property type="molecule type" value="mRNA"/>
</dbReference>
<dbReference type="EMBL" id="X63408">
    <property type="protein sequence ID" value="CAA45004.1"/>
    <property type="molecule type" value="Genomic_RNA"/>
</dbReference>
<dbReference type="PIR" id="JQ1623">
    <property type="entry name" value="JQ1623"/>
</dbReference>
<dbReference type="PIR" id="JQ1987">
    <property type="entry name" value="JQ1987"/>
</dbReference>
<dbReference type="SMR" id="P33494"/>
<dbReference type="GO" id="GO:0030430">
    <property type="term" value="C:host cell cytoplasm"/>
    <property type="evidence" value="ECO:0007669"/>
    <property type="project" value="UniProtKB-SubCell"/>
</dbReference>
<dbReference type="GO" id="GO:0042025">
    <property type="term" value="C:host cell nucleus"/>
    <property type="evidence" value="ECO:0007669"/>
    <property type="project" value="UniProtKB-SubCell"/>
</dbReference>
<dbReference type="GO" id="GO:0044423">
    <property type="term" value="C:virion component"/>
    <property type="evidence" value="ECO:0007669"/>
    <property type="project" value="UniProtKB-KW"/>
</dbReference>
<dbReference type="GO" id="GO:0003723">
    <property type="term" value="F:RNA binding"/>
    <property type="evidence" value="ECO:0007669"/>
    <property type="project" value="UniProtKB-KW"/>
</dbReference>
<dbReference type="GO" id="GO:0039660">
    <property type="term" value="F:structural constituent of virion"/>
    <property type="evidence" value="ECO:0007669"/>
    <property type="project" value="UniProtKB-KW"/>
</dbReference>
<dbReference type="GO" id="GO:0008270">
    <property type="term" value="F:zinc ion binding"/>
    <property type="evidence" value="ECO:0007669"/>
    <property type="project" value="UniProtKB-KW"/>
</dbReference>
<dbReference type="GO" id="GO:0046782">
    <property type="term" value="P:regulation of viral transcription"/>
    <property type="evidence" value="ECO:0007669"/>
    <property type="project" value="InterPro"/>
</dbReference>
<dbReference type="Gene3D" id="1.20.120.1350">
    <property type="entry name" value="Pneumovirus matrix protein 2 (M2), zinc-binding domain"/>
    <property type="match status" value="1"/>
</dbReference>
<dbReference type="InterPro" id="IPR009452">
    <property type="entry name" value="Pneumovirus_M2-1"/>
</dbReference>
<dbReference type="InterPro" id="IPR000571">
    <property type="entry name" value="Znf_CCCH"/>
</dbReference>
<dbReference type="Pfam" id="PF06436">
    <property type="entry name" value="Pneumovirus_M2"/>
    <property type="match status" value="1"/>
</dbReference>
<dbReference type="Pfam" id="PF00642">
    <property type="entry name" value="zf-CCCH"/>
    <property type="match status" value="1"/>
</dbReference>
<dbReference type="PIRSF" id="PIRSF003913">
    <property type="entry name" value="Matrix_glycop-M2_paramyxo"/>
    <property type="match status" value="1"/>
</dbReference>
<dbReference type="SMART" id="SM00356">
    <property type="entry name" value="ZnF_C3H1"/>
    <property type="match status" value="1"/>
</dbReference>
<dbReference type="PROSITE" id="PS50103">
    <property type="entry name" value="ZF_C3H1"/>
    <property type="match status" value="1"/>
</dbReference>
<comment type="function">
    <text evidence="1 2">Essential for viral replication in vivo (By similarity). Plays a role in the association of the matrix protein with the nucleocapsid, which initiates assembly and budding (By similarity).</text>
</comment>
<comment type="subunit">
    <text evidence="1">Homotetramer. The homotetramer interacts with RNA. Interacts with the phosphoprotein (P); this interaction is required for protein M2-1 function, localization in host inclusion bodies. Interacts with the nucleoprotein (N). Interacts with the matrix protein (M); this interaction directs M localization to cytoplasmic inclusions comprising viral proteins L, N, P, and M2-1 and mediates M association with the nucleocapsid.</text>
</comment>
<comment type="subcellular location">
    <subcellularLocation>
        <location evidence="1">Virion</location>
    </subcellularLocation>
    <subcellularLocation>
        <location evidence="1">Host cytoplasm</location>
    </subcellularLocation>
    <subcellularLocation>
        <location evidence="1">Host nucleus</location>
    </subcellularLocation>
    <text evidence="1">Localizes in cytoplasmic inclusion bodies substructures called inclusion bodies associated granules (IBAGs). Forms a layer between the matrix and nucleocapsid.</text>
</comment>
<comment type="domain">
    <text evidence="1 2">Contains a zinc-finger domain on its N-terminus essential for its function (By similarity). Contains an oligomerization domain. The central globular core is responsible for binding to RNA and phosphoprotein (By similarity).</text>
</comment>
<comment type="PTM">
    <text evidence="2">Phosphorylated by host in infected cells. Phosphorylation is not essential for zinc binding activity and oligomerization, but zinc binding activity is necessary for the phosphorylation and oligomerization. Phosphorylation up-regulates viral RNA synthesis, replication, and pathogenesis in vivo.</text>
</comment>
<comment type="similarity">
    <text evidence="4">Belongs to the pneumoviridae M2-1 protein family.</text>
</comment>
<protein>
    <recommendedName>
        <fullName>Protein M2-1</fullName>
    </recommendedName>
    <alternativeName>
        <fullName>Envelope-associated 22 kDa protein</fullName>
    </alternativeName>
</protein>
<keyword id="KW-1035">Host cytoplasm</keyword>
<keyword id="KW-1048">Host nucleus</keyword>
<keyword id="KW-0479">Metal-binding</keyword>
<keyword id="KW-0597">Phosphoprotein</keyword>
<keyword id="KW-0694">RNA-binding</keyword>
<keyword id="KW-0468">Viral matrix protein</keyword>
<keyword id="KW-0946">Virion</keyword>
<keyword id="KW-0862">Zinc</keyword>
<keyword id="KW-0863">Zinc-finger</keyword>
<reference key="1">
    <citation type="journal article" date="1992" name="J. Gen. Virol.">
        <title>Sequence analysis of the 22K, SH and G genes of turkey rhinotracheitis virus and their intergenic regions reveals a gene order different from that of other pneumoviruses.</title>
        <authorList>
            <person name="Ling R."/>
            <person name="Easton A.J."/>
            <person name="Pringle C.R."/>
        </authorList>
    </citation>
    <scope>NUCLEOTIDE SEQUENCE</scope>
</reference>
<reference key="2">
    <citation type="journal article" date="1992" name="J. Gen. Virol.">
        <title>Sequence and in vitro expression of the M2 gene of turkey rhinotracheitis pneumovirus.</title>
        <authorList>
            <person name="Yu Q."/>
            <person name="Davis P.J."/>
            <person name="Brown T.D.K."/>
            <person name="Cavanagh D."/>
        </authorList>
    </citation>
    <scope>NUCLEOTIDE SEQUENCE</scope>
    <source>
        <strain>UK/3BV/85</strain>
    </source>
</reference>
<organism>
    <name type="scientific">Turkey rhinotracheitis virus</name>
    <name type="common">TRTV</name>
    <dbReference type="NCBI Taxonomy" id="11264"/>
    <lineage>
        <taxon>Viruses</taxon>
        <taxon>Riboviria</taxon>
        <taxon>Orthornavirae</taxon>
        <taxon>Negarnaviricota</taxon>
        <taxon>Haploviricotina</taxon>
        <taxon>Monjiviricetes</taxon>
        <taxon>Mononegavirales</taxon>
        <taxon>Pneumoviridae</taxon>
        <taxon>Metapneumovirus</taxon>
        <taxon>Metapneumovirus avis</taxon>
    </lineage>
</organism>
<gene>
    <name type="primary">22K</name>
</gene>
<feature type="chain" id="PRO_0000142841" description="Protein M2-1">
    <location>
        <begin position="1"/>
        <end position="186"/>
    </location>
</feature>
<feature type="zinc finger region" description="C3H1-type" evidence="3">
    <location>
        <begin position="1"/>
        <end position="28"/>
    </location>
</feature>
<feature type="region of interest" description="Oligomerization" evidence="1">
    <location>
        <begin position="32"/>
        <end position="49"/>
    </location>
</feature>
<feature type="region of interest" description="Globular core" evidence="1">
    <location>
        <begin position="75"/>
        <end position="167"/>
    </location>
</feature>
<feature type="site" description="Involved in RNA-binding" evidence="1">
    <location>
        <position position="8"/>
    </location>
</feature>
<feature type="site" description="Involved in RNA-binding" evidence="1">
    <location>
        <position position="23"/>
    </location>
</feature>
<feature type="site" description="Involved in RNA-binding" evidence="1">
    <location>
        <position position="91"/>
    </location>
</feature>
<feature type="site" description="Involved in RNA-binding" evidence="1">
    <location>
        <position position="149"/>
    </location>
</feature>
<feature type="modified residue" description="Phosphoserine" evidence="2">
    <location>
        <position position="57"/>
    </location>
</feature>
<feature type="modified residue" description="Phosphoserine" evidence="2">
    <location>
        <position position="60"/>
    </location>
</feature>
<feature type="sequence conflict" description="In Ref. 2; CAA45004." evidence="4" ref="2">
    <original>N</original>
    <variation>S</variation>
    <location>
        <position position="175"/>
    </location>
</feature>
<name>M21_TRTV</name>
<accession>P33494</accession>
<sequence length="186" mass="20986">MSRRNPCRYEIRGKCNRGSSCTFNHNYWSWPDHVLLVRANYMLNQLLRNTDRTDGLSLISGAGREDRTQDFVLGSANVVQNYIEGNTTITKSAACYSLYNIIKQLQENDVKTSRDSMLEDPKHVALHNLILSYVDMSKNPASLINSLKRLPREKLKKLAKIILQLSAGPESDNANGNTLQKGDSNN</sequence>
<proteinExistence type="evidence at transcript level"/>
<evidence type="ECO:0000250" key="1">
    <source>
        <dbReference type="UniProtKB" id="P04545"/>
    </source>
</evidence>
<evidence type="ECO:0000250" key="2">
    <source>
        <dbReference type="UniProtKB" id="Q6WB97"/>
    </source>
</evidence>
<evidence type="ECO:0000255" key="3">
    <source>
        <dbReference type="PROSITE-ProRule" id="PRU00723"/>
    </source>
</evidence>
<evidence type="ECO:0000305" key="4"/>
<organismHost>
    <name type="scientific">Meleagris gallopavo</name>
    <name type="common">Wild turkey</name>
    <dbReference type="NCBI Taxonomy" id="9103"/>
</organismHost>